<accession>Q3YRP7</accession>
<evidence type="ECO:0000255" key="1">
    <source>
        <dbReference type="HAMAP-Rule" id="MF_01815"/>
    </source>
</evidence>
<gene>
    <name evidence="1" type="primary">fabH</name>
    <name type="ordered locus">Ecaj_0574</name>
</gene>
<name>FABH_EHRCJ</name>
<dbReference type="EC" id="2.3.1.180" evidence="1"/>
<dbReference type="EMBL" id="CP000107">
    <property type="protein sequence ID" value="AAZ68608.1"/>
    <property type="molecule type" value="Genomic_DNA"/>
</dbReference>
<dbReference type="RefSeq" id="WP_011304686.1">
    <property type="nucleotide sequence ID" value="NC_007354.1"/>
</dbReference>
<dbReference type="SMR" id="Q3YRP7"/>
<dbReference type="FunCoup" id="Q3YRP7">
    <property type="interactions" value="304"/>
</dbReference>
<dbReference type="STRING" id="269484.Ecaj_0574"/>
<dbReference type="KEGG" id="ecn:Ecaj_0574"/>
<dbReference type="eggNOG" id="COG0332">
    <property type="taxonomic scope" value="Bacteria"/>
</dbReference>
<dbReference type="HOGENOM" id="CLU_039592_3_1_5"/>
<dbReference type="InParanoid" id="Q3YRP7"/>
<dbReference type="UniPathway" id="UPA00094"/>
<dbReference type="Proteomes" id="UP000000435">
    <property type="component" value="Chromosome"/>
</dbReference>
<dbReference type="GO" id="GO:0005737">
    <property type="term" value="C:cytoplasm"/>
    <property type="evidence" value="ECO:0007669"/>
    <property type="project" value="UniProtKB-SubCell"/>
</dbReference>
<dbReference type="GO" id="GO:0004315">
    <property type="term" value="F:3-oxoacyl-[acyl-carrier-protein] synthase activity"/>
    <property type="evidence" value="ECO:0007669"/>
    <property type="project" value="InterPro"/>
</dbReference>
<dbReference type="GO" id="GO:0033818">
    <property type="term" value="F:beta-ketoacyl-acyl-carrier-protein synthase III activity"/>
    <property type="evidence" value="ECO:0007669"/>
    <property type="project" value="UniProtKB-UniRule"/>
</dbReference>
<dbReference type="GO" id="GO:0006633">
    <property type="term" value="P:fatty acid biosynthetic process"/>
    <property type="evidence" value="ECO:0007669"/>
    <property type="project" value="UniProtKB-UniRule"/>
</dbReference>
<dbReference type="GO" id="GO:0044550">
    <property type="term" value="P:secondary metabolite biosynthetic process"/>
    <property type="evidence" value="ECO:0007669"/>
    <property type="project" value="TreeGrafter"/>
</dbReference>
<dbReference type="CDD" id="cd00830">
    <property type="entry name" value="KAS_III"/>
    <property type="match status" value="1"/>
</dbReference>
<dbReference type="FunFam" id="3.40.47.10:FF:000004">
    <property type="entry name" value="3-oxoacyl-[acyl-carrier-protein] synthase 3"/>
    <property type="match status" value="1"/>
</dbReference>
<dbReference type="Gene3D" id="3.40.47.10">
    <property type="match status" value="1"/>
</dbReference>
<dbReference type="HAMAP" id="MF_01815">
    <property type="entry name" value="FabH"/>
    <property type="match status" value="1"/>
</dbReference>
<dbReference type="InterPro" id="IPR013747">
    <property type="entry name" value="ACP_syn_III_C"/>
</dbReference>
<dbReference type="InterPro" id="IPR013751">
    <property type="entry name" value="ACP_syn_III_N"/>
</dbReference>
<dbReference type="InterPro" id="IPR004655">
    <property type="entry name" value="FabH"/>
</dbReference>
<dbReference type="InterPro" id="IPR016039">
    <property type="entry name" value="Thiolase-like"/>
</dbReference>
<dbReference type="NCBIfam" id="TIGR00747">
    <property type="entry name" value="fabH"/>
    <property type="match status" value="1"/>
</dbReference>
<dbReference type="NCBIfam" id="NF006829">
    <property type="entry name" value="PRK09352.1"/>
    <property type="match status" value="1"/>
</dbReference>
<dbReference type="PANTHER" id="PTHR34069">
    <property type="entry name" value="3-OXOACYL-[ACYL-CARRIER-PROTEIN] SYNTHASE 3"/>
    <property type="match status" value="1"/>
</dbReference>
<dbReference type="PANTHER" id="PTHR34069:SF2">
    <property type="entry name" value="BETA-KETOACYL-[ACYL-CARRIER-PROTEIN] SYNTHASE III"/>
    <property type="match status" value="1"/>
</dbReference>
<dbReference type="Pfam" id="PF08545">
    <property type="entry name" value="ACP_syn_III"/>
    <property type="match status" value="1"/>
</dbReference>
<dbReference type="Pfam" id="PF08541">
    <property type="entry name" value="ACP_syn_III_C"/>
    <property type="match status" value="1"/>
</dbReference>
<dbReference type="SUPFAM" id="SSF53901">
    <property type="entry name" value="Thiolase-like"/>
    <property type="match status" value="1"/>
</dbReference>
<organism>
    <name type="scientific">Ehrlichia canis (strain Jake)</name>
    <dbReference type="NCBI Taxonomy" id="269484"/>
    <lineage>
        <taxon>Bacteria</taxon>
        <taxon>Pseudomonadati</taxon>
        <taxon>Pseudomonadota</taxon>
        <taxon>Alphaproteobacteria</taxon>
        <taxon>Rickettsiales</taxon>
        <taxon>Anaplasmataceae</taxon>
        <taxon>Ehrlichia</taxon>
    </lineage>
</organism>
<feature type="chain" id="PRO_1000056357" description="Beta-ketoacyl-[acyl-carrier-protein] synthase III">
    <location>
        <begin position="1"/>
        <end position="319"/>
    </location>
</feature>
<feature type="region of interest" description="ACP-binding" evidence="1">
    <location>
        <begin position="247"/>
        <end position="251"/>
    </location>
</feature>
<feature type="active site" evidence="1">
    <location>
        <position position="113"/>
    </location>
</feature>
<feature type="active site" evidence="1">
    <location>
        <position position="246"/>
    </location>
</feature>
<feature type="active site" evidence="1">
    <location>
        <position position="276"/>
    </location>
</feature>
<sequence length="319" mass="34503">MKRSLILGIGSYLPKKVVTNDELTLTIETSDEWIVKRTGIKQRHIAEDNEMTSDMATSAAKLALDNAGIDKNEIDLIIVATTTPDRTFPSCATIVQSKLGCKNAFAFDIQAVCSGFVYALSIADNFIKSGQVRTVLVIGAEIMSRILDWQDRSTCVLFGDGAGAIVLSSSTEDDSGIISTNLHSDGTFHDLLYTSGGTAYNGVAGTICMNGTVVFEHAIEKLSASILEILSQNDLEICDIDWFVLHQANIRIIELVARRLKIPYEKMIVSIDQHANTSAASIPLALYYARSSGKLKKHDVAVLAAIGGGLTWGTCLVRI</sequence>
<reference key="1">
    <citation type="journal article" date="2006" name="J. Bacteriol.">
        <title>The genome of the obligately intracellular bacterium Ehrlichia canis reveals themes of complex membrane structure and immune evasion strategies.</title>
        <authorList>
            <person name="Mavromatis K."/>
            <person name="Doyle C.K."/>
            <person name="Lykidis A."/>
            <person name="Ivanova N."/>
            <person name="Francino M.P."/>
            <person name="Chain P."/>
            <person name="Shin M."/>
            <person name="Malfatti S."/>
            <person name="Larimer F."/>
            <person name="Copeland A."/>
            <person name="Detter J.C."/>
            <person name="Land M."/>
            <person name="Richardson P.M."/>
            <person name="Yu X.J."/>
            <person name="Walker D.H."/>
            <person name="McBride J.W."/>
            <person name="Kyrpides N.C."/>
        </authorList>
    </citation>
    <scope>NUCLEOTIDE SEQUENCE [LARGE SCALE GENOMIC DNA]</scope>
    <source>
        <strain>Jake</strain>
    </source>
</reference>
<comment type="function">
    <text evidence="1">Catalyzes the condensation reaction of fatty acid synthesis by the addition to an acyl acceptor of two carbons from malonyl-ACP. Catalyzes the first condensation reaction which initiates fatty acid synthesis and may therefore play a role in governing the total rate of fatty acid production. Possesses both acetoacetyl-ACP synthase and acetyl transacylase activities. Its substrate specificity determines the biosynthesis of branched-chain and/or straight-chain of fatty acids.</text>
</comment>
<comment type="catalytic activity">
    <reaction evidence="1">
        <text>malonyl-[ACP] + acetyl-CoA + H(+) = 3-oxobutanoyl-[ACP] + CO2 + CoA</text>
        <dbReference type="Rhea" id="RHEA:12080"/>
        <dbReference type="Rhea" id="RHEA-COMP:9623"/>
        <dbReference type="Rhea" id="RHEA-COMP:9625"/>
        <dbReference type="ChEBI" id="CHEBI:15378"/>
        <dbReference type="ChEBI" id="CHEBI:16526"/>
        <dbReference type="ChEBI" id="CHEBI:57287"/>
        <dbReference type="ChEBI" id="CHEBI:57288"/>
        <dbReference type="ChEBI" id="CHEBI:78449"/>
        <dbReference type="ChEBI" id="CHEBI:78450"/>
        <dbReference type="EC" id="2.3.1.180"/>
    </reaction>
</comment>
<comment type="pathway">
    <text evidence="1">Lipid metabolism; fatty acid biosynthesis.</text>
</comment>
<comment type="subunit">
    <text evidence="1">Homodimer.</text>
</comment>
<comment type="subcellular location">
    <subcellularLocation>
        <location evidence="1">Cytoplasm</location>
    </subcellularLocation>
</comment>
<comment type="domain">
    <text evidence="1">The last Arg residue of the ACP-binding site is essential for the weak association between ACP/AcpP and FabH.</text>
</comment>
<comment type="similarity">
    <text evidence="1">Belongs to the thiolase-like superfamily. FabH family.</text>
</comment>
<keyword id="KW-0012">Acyltransferase</keyword>
<keyword id="KW-0963">Cytoplasm</keyword>
<keyword id="KW-0275">Fatty acid biosynthesis</keyword>
<keyword id="KW-0276">Fatty acid metabolism</keyword>
<keyword id="KW-0444">Lipid biosynthesis</keyword>
<keyword id="KW-0443">Lipid metabolism</keyword>
<keyword id="KW-0511">Multifunctional enzyme</keyword>
<keyword id="KW-0808">Transferase</keyword>
<protein>
    <recommendedName>
        <fullName evidence="1">Beta-ketoacyl-[acyl-carrier-protein] synthase III</fullName>
        <shortName evidence="1">Beta-ketoacyl-ACP synthase III</shortName>
        <shortName evidence="1">KAS III</shortName>
        <ecNumber evidence="1">2.3.1.180</ecNumber>
    </recommendedName>
    <alternativeName>
        <fullName evidence="1">3-oxoacyl-[acyl-carrier-protein] synthase 3</fullName>
    </alternativeName>
    <alternativeName>
        <fullName evidence="1">3-oxoacyl-[acyl-carrier-protein] synthase III</fullName>
    </alternativeName>
</protein>
<proteinExistence type="inferred from homology"/>